<reference key="1">
    <citation type="journal article" date="2000" name="Nature">
        <title>Sequence and analysis of chromosome 1 of the plant Arabidopsis thaliana.</title>
        <authorList>
            <person name="Theologis A."/>
            <person name="Ecker J.R."/>
            <person name="Palm C.J."/>
            <person name="Federspiel N.A."/>
            <person name="Kaul S."/>
            <person name="White O."/>
            <person name="Alonso J."/>
            <person name="Altafi H."/>
            <person name="Araujo R."/>
            <person name="Bowman C.L."/>
            <person name="Brooks S.Y."/>
            <person name="Buehler E."/>
            <person name="Chan A."/>
            <person name="Chao Q."/>
            <person name="Chen H."/>
            <person name="Cheuk R.F."/>
            <person name="Chin C.W."/>
            <person name="Chung M.K."/>
            <person name="Conn L."/>
            <person name="Conway A.B."/>
            <person name="Conway A.R."/>
            <person name="Creasy T.H."/>
            <person name="Dewar K."/>
            <person name="Dunn P."/>
            <person name="Etgu P."/>
            <person name="Feldblyum T.V."/>
            <person name="Feng J.-D."/>
            <person name="Fong B."/>
            <person name="Fujii C.Y."/>
            <person name="Gill J.E."/>
            <person name="Goldsmith A.D."/>
            <person name="Haas B."/>
            <person name="Hansen N.F."/>
            <person name="Hughes B."/>
            <person name="Huizar L."/>
            <person name="Hunter J.L."/>
            <person name="Jenkins J."/>
            <person name="Johnson-Hopson C."/>
            <person name="Khan S."/>
            <person name="Khaykin E."/>
            <person name="Kim C.J."/>
            <person name="Koo H.L."/>
            <person name="Kremenetskaia I."/>
            <person name="Kurtz D.B."/>
            <person name="Kwan A."/>
            <person name="Lam B."/>
            <person name="Langin-Hooper S."/>
            <person name="Lee A."/>
            <person name="Lee J.M."/>
            <person name="Lenz C.A."/>
            <person name="Li J.H."/>
            <person name="Li Y.-P."/>
            <person name="Lin X."/>
            <person name="Liu S.X."/>
            <person name="Liu Z.A."/>
            <person name="Luros J.S."/>
            <person name="Maiti R."/>
            <person name="Marziali A."/>
            <person name="Militscher J."/>
            <person name="Miranda M."/>
            <person name="Nguyen M."/>
            <person name="Nierman W.C."/>
            <person name="Osborne B.I."/>
            <person name="Pai G."/>
            <person name="Peterson J."/>
            <person name="Pham P.K."/>
            <person name="Rizzo M."/>
            <person name="Rooney T."/>
            <person name="Rowley D."/>
            <person name="Sakano H."/>
            <person name="Salzberg S.L."/>
            <person name="Schwartz J.R."/>
            <person name="Shinn P."/>
            <person name="Southwick A.M."/>
            <person name="Sun H."/>
            <person name="Tallon L.J."/>
            <person name="Tambunga G."/>
            <person name="Toriumi M.J."/>
            <person name="Town C.D."/>
            <person name="Utterback T."/>
            <person name="Van Aken S."/>
            <person name="Vaysberg M."/>
            <person name="Vysotskaia V.S."/>
            <person name="Walker M."/>
            <person name="Wu D."/>
            <person name="Yu G."/>
            <person name="Fraser C.M."/>
            <person name="Venter J.C."/>
            <person name="Davis R.W."/>
        </authorList>
    </citation>
    <scope>NUCLEOTIDE SEQUENCE [LARGE SCALE GENOMIC DNA]</scope>
    <source>
        <strain>cv. Columbia</strain>
    </source>
</reference>
<reference key="2">
    <citation type="journal article" date="2017" name="Plant J.">
        <title>Araport11: a complete reannotation of the Arabidopsis thaliana reference genome.</title>
        <authorList>
            <person name="Cheng C.Y."/>
            <person name="Krishnakumar V."/>
            <person name="Chan A.P."/>
            <person name="Thibaud-Nissen F."/>
            <person name="Schobel S."/>
            <person name="Town C.D."/>
        </authorList>
    </citation>
    <scope>GENOME REANNOTATION</scope>
    <source>
        <strain>cv. Columbia</strain>
    </source>
</reference>
<reference key="3">
    <citation type="journal article" date="2003" name="Science">
        <title>Empirical analysis of transcriptional activity in the Arabidopsis genome.</title>
        <authorList>
            <person name="Yamada K."/>
            <person name="Lim J."/>
            <person name="Dale J.M."/>
            <person name="Chen H."/>
            <person name="Shinn P."/>
            <person name="Palm C.J."/>
            <person name="Southwick A.M."/>
            <person name="Wu H.C."/>
            <person name="Kim C.J."/>
            <person name="Nguyen M."/>
            <person name="Pham P.K."/>
            <person name="Cheuk R.F."/>
            <person name="Karlin-Newmann G."/>
            <person name="Liu S.X."/>
            <person name="Lam B."/>
            <person name="Sakano H."/>
            <person name="Wu T."/>
            <person name="Yu G."/>
            <person name="Miranda M."/>
            <person name="Quach H.L."/>
            <person name="Tripp M."/>
            <person name="Chang C.H."/>
            <person name="Lee J.M."/>
            <person name="Toriumi M.J."/>
            <person name="Chan M.M."/>
            <person name="Tang C.C."/>
            <person name="Onodera C.S."/>
            <person name="Deng J.M."/>
            <person name="Akiyama K."/>
            <person name="Ansari Y."/>
            <person name="Arakawa T."/>
            <person name="Banh J."/>
            <person name="Banno F."/>
            <person name="Bowser L."/>
            <person name="Brooks S.Y."/>
            <person name="Carninci P."/>
            <person name="Chao Q."/>
            <person name="Choy N."/>
            <person name="Enju A."/>
            <person name="Goldsmith A.D."/>
            <person name="Gurjal M."/>
            <person name="Hansen N.F."/>
            <person name="Hayashizaki Y."/>
            <person name="Johnson-Hopson C."/>
            <person name="Hsuan V.W."/>
            <person name="Iida K."/>
            <person name="Karnes M."/>
            <person name="Khan S."/>
            <person name="Koesema E."/>
            <person name="Ishida J."/>
            <person name="Jiang P.X."/>
            <person name="Jones T."/>
            <person name="Kawai J."/>
            <person name="Kamiya A."/>
            <person name="Meyers C."/>
            <person name="Nakajima M."/>
            <person name="Narusaka M."/>
            <person name="Seki M."/>
            <person name="Sakurai T."/>
            <person name="Satou M."/>
            <person name="Tamse R."/>
            <person name="Vaysberg M."/>
            <person name="Wallender E.K."/>
            <person name="Wong C."/>
            <person name="Yamamura Y."/>
            <person name="Yuan S."/>
            <person name="Shinozaki K."/>
            <person name="Davis R.W."/>
            <person name="Theologis A."/>
            <person name="Ecker J.R."/>
        </authorList>
    </citation>
    <scope>NUCLEOTIDE SEQUENCE [LARGE SCALE MRNA]</scope>
    <source>
        <strain>cv. Columbia</strain>
    </source>
</reference>
<reference key="4">
    <citation type="journal article" date="1996" name="Plant J.">
        <title>Further progress towards a catalogue of all Arabidopsis genes: analysis of a set of 5000 non-redundant ESTs.</title>
        <authorList>
            <person name="Cooke R."/>
            <person name="Raynal M."/>
            <person name="Laudie M."/>
            <person name="Grellet F."/>
            <person name="Delseny M."/>
            <person name="Morris P.-C."/>
            <person name="Guerrier D."/>
            <person name="Giraudat J."/>
            <person name="Quigley F."/>
            <person name="Clabault G."/>
            <person name="Li Y.-F."/>
            <person name="Mache R."/>
            <person name="Krivitzky M."/>
            <person name="Gy I.J.-J."/>
            <person name="Kreis M."/>
            <person name="Lecharny A."/>
            <person name="Parmentier Y."/>
            <person name="Marbach J."/>
            <person name="Fleck J."/>
            <person name="Clement B."/>
            <person name="Philipps G."/>
            <person name="Herve C."/>
            <person name="Bardet C."/>
            <person name="Tremousaygue D."/>
            <person name="Lescure B."/>
            <person name="Lacomme C."/>
            <person name="Roby D."/>
            <person name="Jourjon M.-F."/>
            <person name="Chabrier P."/>
            <person name="Charpenteau J.-L."/>
            <person name="Desprez T."/>
            <person name="Amselem J."/>
            <person name="Chiapello H."/>
            <person name="Hoefte H."/>
        </authorList>
    </citation>
    <scope>NUCLEOTIDE SEQUENCE [LARGE SCALE MRNA]</scope>
    <source>
        <strain>cv. Columbia</strain>
    </source>
</reference>
<reference key="5">
    <citation type="submission" date="2002-03" db="EMBL/GenBank/DDBJ databases">
        <title>Full-length cDNA from Arabidopsis thaliana.</title>
        <authorList>
            <person name="Brover V.V."/>
            <person name="Troukhan M.E."/>
            <person name="Alexandrov N.A."/>
            <person name="Lu Y.-P."/>
            <person name="Flavell R.B."/>
            <person name="Feldmann K.A."/>
        </authorList>
    </citation>
    <scope>NUCLEOTIDE SEQUENCE [LARGE SCALE MRNA]</scope>
</reference>
<reference key="6">
    <citation type="journal article" date="2001" name="Plant Physiol.">
        <title>The organization of cytoplasmic ribosomal protein genes in the Arabidopsis genome.</title>
        <authorList>
            <person name="Barakat A."/>
            <person name="Szick-Miranda K."/>
            <person name="Chang I.-F."/>
            <person name="Guyot R."/>
            <person name="Blanc G."/>
            <person name="Cooke R."/>
            <person name="Delseny M."/>
            <person name="Bailey-Serres J."/>
        </authorList>
    </citation>
    <scope>GENE FAMILY ORGANIZATION</scope>
    <scope>NOMENCLATURE</scope>
</reference>
<reference key="7">
    <citation type="journal article" date="2023" name="Plant Cell">
        <title>An updated nomenclature for plant ribosomal protein genes.</title>
        <authorList>
            <person name="Scarpin M.R."/>
            <person name="Busche M."/>
            <person name="Martinez R.E."/>
            <person name="Harper L.C."/>
            <person name="Reiser L."/>
            <person name="Szakonyi D."/>
            <person name="Merchante C."/>
            <person name="Lan T."/>
            <person name="Xiong W."/>
            <person name="Mo B."/>
            <person name="Tang G."/>
            <person name="Chen X."/>
            <person name="Bailey-Serres J."/>
            <person name="Browning K.S."/>
            <person name="Brunkard J.O."/>
        </authorList>
    </citation>
    <scope>NOMENCLATURE</scope>
</reference>
<keyword id="KW-0025">Alternative splicing</keyword>
<keyword id="KW-1185">Reference proteome</keyword>
<keyword id="KW-0687">Ribonucleoprotein</keyword>
<keyword id="KW-0689">Ribosomal protein</keyword>
<name>RL341_ARATH</name>
<gene>
    <name type="primary">RPL34A</name>
    <name type="ordered locus">At1g26880</name>
    <name type="ORF">T2P11.7</name>
</gene>
<proteinExistence type="evidence at transcript level"/>
<dbReference type="EMBL" id="AC005508">
    <property type="protein sequence ID" value="AAD14494.1"/>
    <property type="molecule type" value="Genomic_DNA"/>
</dbReference>
<dbReference type="EMBL" id="CP002684">
    <property type="protein sequence ID" value="AEE30753.1"/>
    <property type="molecule type" value="Genomic_DNA"/>
</dbReference>
<dbReference type="EMBL" id="AY080712">
    <property type="protein sequence ID" value="AAL85030.1"/>
    <property type="molecule type" value="mRNA"/>
</dbReference>
<dbReference type="EMBL" id="AY117327">
    <property type="protein sequence ID" value="AAM51402.1"/>
    <property type="molecule type" value="mRNA"/>
</dbReference>
<dbReference type="EMBL" id="F20073">
    <property type="protein sequence ID" value="CAA23390.1"/>
    <property type="molecule type" value="mRNA"/>
</dbReference>
<dbReference type="EMBL" id="AY088495">
    <property type="protein sequence ID" value="AAM66030.1"/>
    <property type="molecule type" value="mRNA"/>
</dbReference>
<dbReference type="PIR" id="F86395">
    <property type="entry name" value="F86395"/>
</dbReference>
<dbReference type="RefSeq" id="NP_174010.1">
    <molecule id="Q42351-1"/>
    <property type="nucleotide sequence ID" value="NM_102452.4"/>
</dbReference>
<dbReference type="SMR" id="Q42351"/>
<dbReference type="BioGRID" id="23571">
    <property type="interactions" value="73"/>
</dbReference>
<dbReference type="FunCoup" id="Q42351">
    <property type="interactions" value="3514"/>
</dbReference>
<dbReference type="STRING" id="3702.Q42351"/>
<dbReference type="iPTMnet" id="Q42351"/>
<dbReference type="PaxDb" id="3702-AT1G26880.1"/>
<dbReference type="EnsemblPlants" id="AT1G26880.1">
    <molecule id="Q42351-1"/>
    <property type="protein sequence ID" value="AT1G26880.1"/>
    <property type="gene ID" value="AT1G26880"/>
</dbReference>
<dbReference type="GeneID" id="838331"/>
<dbReference type="Gramene" id="AT1G26880.1">
    <molecule id="Q42351-1"/>
    <property type="protein sequence ID" value="AT1G26880.1"/>
    <property type="gene ID" value="AT1G26880"/>
</dbReference>
<dbReference type="KEGG" id="ath:AT1G26880"/>
<dbReference type="Araport" id="AT1G26880"/>
<dbReference type="TAIR" id="AT1G26880"/>
<dbReference type="eggNOG" id="KOG1790">
    <property type="taxonomic scope" value="Eukaryota"/>
</dbReference>
<dbReference type="HOGENOM" id="CLU_118652_1_1_1"/>
<dbReference type="InParanoid" id="Q42351"/>
<dbReference type="OMA" id="APHCAET"/>
<dbReference type="OrthoDB" id="1095761at2759"/>
<dbReference type="PhylomeDB" id="Q42351"/>
<dbReference type="CD-CODE" id="4299E36E">
    <property type="entry name" value="Nucleolus"/>
</dbReference>
<dbReference type="PRO" id="PR:Q42351"/>
<dbReference type="Proteomes" id="UP000006548">
    <property type="component" value="Chromosome 1"/>
</dbReference>
<dbReference type="ExpressionAtlas" id="Q42351">
    <property type="expression patterns" value="baseline and differential"/>
</dbReference>
<dbReference type="GO" id="GO:0005730">
    <property type="term" value="C:nucleolus"/>
    <property type="evidence" value="ECO:0007005"/>
    <property type="project" value="TAIR"/>
</dbReference>
<dbReference type="GO" id="GO:0005634">
    <property type="term" value="C:nucleus"/>
    <property type="evidence" value="ECO:0007005"/>
    <property type="project" value="TAIR"/>
</dbReference>
<dbReference type="GO" id="GO:1990904">
    <property type="term" value="C:ribonucleoprotein complex"/>
    <property type="evidence" value="ECO:0007669"/>
    <property type="project" value="UniProtKB-KW"/>
</dbReference>
<dbReference type="GO" id="GO:0005840">
    <property type="term" value="C:ribosome"/>
    <property type="evidence" value="ECO:0007669"/>
    <property type="project" value="UniProtKB-KW"/>
</dbReference>
<dbReference type="GO" id="GO:0003729">
    <property type="term" value="F:mRNA binding"/>
    <property type="evidence" value="ECO:0000314"/>
    <property type="project" value="TAIR"/>
</dbReference>
<dbReference type="GO" id="GO:0003735">
    <property type="term" value="F:structural constituent of ribosome"/>
    <property type="evidence" value="ECO:0007669"/>
    <property type="project" value="InterPro"/>
</dbReference>
<dbReference type="GO" id="GO:0006412">
    <property type="term" value="P:translation"/>
    <property type="evidence" value="ECO:0007669"/>
    <property type="project" value="InterPro"/>
</dbReference>
<dbReference type="Gene3D" id="6.20.340.10">
    <property type="match status" value="1"/>
</dbReference>
<dbReference type="Gene3D" id="6.20.370.70">
    <property type="match status" value="1"/>
</dbReference>
<dbReference type="InterPro" id="IPR008195">
    <property type="entry name" value="Ribosomal_eL34"/>
</dbReference>
<dbReference type="InterPro" id="IPR038562">
    <property type="entry name" value="Ribosomal_eL34_C_sf"/>
</dbReference>
<dbReference type="InterPro" id="IPR018065">
    <property type="entry name" value="Ribosomal_eL34_CS"/>
</dbReference>
<dbReference type="PANTHER" id="PTHR10759">
    <property type="entry name" value="60S RIBOSOMAL PROTEIN L34"/>
    <property type="match status" value="1"/>
</dbReference>
<dbReference type="Pfam" id="PF01199">
    <property type="entry name" value="Ribosomal_L34e"/>
    <property type="match status" value="1"/>
</dbReference>
<dbReference type="PRINTS" id="PR01250">
    <property type="entry name" value="RIBOSOMALL34"/>
</dbReference>
<dbReference type="PROSITE" id="PS01145">
    <property type="entry name" value="RIBOSOMAL_L34E"/>
    <property type="match status" value="1"/>
</dbReference>
<evidence type="ECO:0000256" key="1">
    <source>
        <dbReference type="SAM" id="MobiDB-lite"/>
    </source>
</evidence>
<evidence type="ECO:0000303" key="2">
    <source>
    </source>
</evidence>
<evidence type="ECO:0000305" key="3"/>
<comment type="alternative products">
    <event type="alternative splicing"/>
    <isoform>
        <id>Q42351-1</id>
        <name>1</name>
        <sequence type="displayed"/>
    </isoform>
    <text>A number of isoforms are produced. According to EST sequences.</text>
</comment>
<comment type="similarity">
    <text evidence="3">Belongs to the eukaryotic ribosomal protein eL34 family.</text>
</comment>
<organism>
    <name type="scientific">Arabidopsis thaliana</name>
    <name type="common">Mouse-ear cress</name>
    <dbReference type="NCBI Taxonomy" id="3702"/>
    <lineage>
        <taxon>Eukaryota</taxon>
        <taxon>Viridiplantae</taxon>
        <taxon>Streptophyta</taxon>
        <taxon>Embryophyta</taxon>
        <taxon>Tracheophyta</taxon>
        <taxon>Spermatophyta</taxon>
        <taxon>Magnoliopsida</taxon>
        <taxon>eudicotyledons</taxon>
        <taxon>Gunneridae</taxon>
        <taxon>Pentapetalae</taxon>
        <taxon>rosids</taxon>
        <taxon>malvids</taxon>
        <taxon>Brassicales</taxon>
        <taxon>Brassicaceae</taxon>
        <taxon>Camelineae</taxon>
        <taxon>Arabidopsis</taxon>
    </lineage>
</organism>
<sequence length="120" mass="13705">MVQRLVYRSRHSYATKSNQHRIVKTPGGKLVYQTTKKRASGPKCPVTGKRIQGIPHLRPSEYKRSRLSRNRRTVNRAYGGVLSGSAVRERIIRAFLVEEQKIVKKVLKLQKAKEKVAPKA</sequence>
<accession>Q42351</accession>
<accession>Q8L9D3</accession>
<feature type="chain" id="PRO_0000131839" description="Large ribosomal subunit protein eL34z">
    <location>
        <begin position="1"/>
        <end position="120"/>
    </location>
</feature>
<feature type="region of interest" description="Disordered" evidence="1">
    <location>
        <begin position="31"/>
        <end position="51"/>
    </location>
</feature>
<feature type="sequence conflict" description="In Ref. 5; AAM66030." evidence="3" ref="5">
    <original>R</original>
    <variation>K</variation>
    <location>
        <position position="38"/>
    </location>
</feature>
<protein>
    <recommendedName>
        <fullName evidence="2">Large ribosomal subunit protein eL34z</fullName>
    </recommendedName>
    <alternativeName>
        <fullName>60S ribosomal protein L34-1</fullName>
    </alternativeName>
</protein>